<evidence type="ECO:0000255" key="1">
    <source>
        <dbReference type="HAMAP-Rule" id="MF_00361"/>
    </source>
</evidence>
<dbReference type="EC" id="2.7.1.23" evidence="1"/>
<dbReference type="EMBL" id="CP000416">
    <property type="protein sequence ID" value="ABJ64569.1"/>
    <property type="molecule type" value="Genomic_DNA"/>
</dbReference>
<dbReference type="RefSeq" id="WP_011668197.1">
    <property type="nucleotide sequence ID" value="NC_008497.1"/>
</dbReference>
<dbReference type="SMR" id="Q03QF3"/>
<dbReference type="STRING" id="387344.LVIS_1472"/>
<dbReference type="KEGG" id="lbr:LVIS_1472"/>
<dbReference type="PATRIC" id="fig|387344.15.peg.1407"/>
<dbReference type="eggNOG" id="COG0061">
    <property type="taxonomic scope" value="Bacteria"/>
</dbReference>
<dbReference type="HOGENOM" id="CLU_008831_0_3_9"/>
<dbReference type="Proteomes" id="UP000001652">
    <property type="component" value="Chromosome"/>
</dbReference>
<dbReference type="GO" id="GO:0005737">
    <property type="term" value="C:cytoplasm"/>
    <property type="evidence" value="ECO:0007669"/>
    <property type="project" value="UniProtKB-SubCell"/>
</dbReference>
<dbReference type="GO" id="GO:0005524">
    <property type="term" value="F:ATP binding"/>
    <property type="evidence" value="ECO:0007669"/>
    <property type="project" value="UniProtKB-KW"/>
</dbReference>
<dbReference type="GO" id="GO:0046872">
    <property type="term" value="F:metal ion binding"/>
    <property type="evidence" value="ECO:0007669"/>
    <property type="project" value="UniProtKB-UniRule"/>
</dbReference>
<dbReference type="GO" id="GO:0051287">
    <property type="term" value="F:NAD binding"/>
    <property type="evidence" value="ECO:0007669"/>
    <property type="project" value="UniProtKB-ARBA"/>
</dbReference>
<dbReference type="GO" id="GO:0003951">
    <property type="term" value="F:NAD+ kinase activity"/>
    <property type="evidence" value="ECO:0007669"/>
    <property type="project" value="UniProtKB-UniRule"/>
</dbReference>
<dbReference type="GO" id="GO:0019674">
    <property type="term" value="P:NAD metabolic process"/>
    <property type="evidence" value="ECO:0007669"/>
    <property type="project" value="InterPro"/>
</dbReference>
<dbReference type="GO" id="GO:0006741">
    <property type="term" value="P:NADP biosynthetic process"/>
    <property type="evidence" value="ECO:0007669"/>
    <property type="project" value="UniProtKB-UniRule"/>
</dbReference>
<dbReference type="Gene3D" id="3.40.50.10330">
    <property type="entry name" value="Probable inorganic polyphosphate/atp-NAD kinase, domain 1"/>
    <property type="match status" value="1"/>
</dbReference>
<dbReference type="Gene3D" id="2.60.200.30">
    <property type="entry name" value="Probable inorganic polyphosphate/atp-NAD kinase, domain 2"/>
    <property type="match status" value="1"/>
</dbReference>
<dbReference type="HAMAP" id="MF_00361">
    <property type="entry name" value="NAD_kinase"/>
    <property type="match status" value="1"/>
</dbReference>
<dbReference type="InterPro" id="IPR017438">
    <property type="entry name" value="ATP-NAD_kinase_N"/>
</dbReference>
<dbReference type="InterPro" id="IPR017437">
    <property type="entry name" value="ATP-NAD_kinase_PpnK-typ_C"/>
</dbReference>
<dbReference type="InterPro" id="IPR016064">
    <property type="entry name" value="NAD/diacylglycerol_kinase_sf"/>
</dbReference>
<dbReference type="InterPro" id="IPR002504">
    <property type="entry name" value="NADK"/>
</dbReference>
<dbReference type="NCBIfam" id="NF003424">
    <property type="entry name" value="PRK04885.1"/>
    <property type="match status" value="1"/>
</dbReference>
<dbReference type="PANTHER" id="PTHR20275">
    <property type="entry name" value="NAD KINASE"/>
    <property type="match status" value="1"/>
</dbReference>
<dbReference type="PANTHER" id="PTHR20275:SF0">
    <property type="entry name" value="NAD KINASE"/>
    <property type="match status" value="1"/>
</dbReference>
<dbReference type="Pfam" id="PF01513">
    <property type="entry name" value="NAD_kinase"/>
    <property type="match status" value="1"/>
</dbReference>
<dbReference type="Pfam" id="PF20143">
    <property type="entry name" value="NAD_kinase_C"/>
    <property type="match status" value="1"/>
</dbReference>
<dbReference type="SUPFAM" id="SSF111331">
    <property type="entry name" value="NAD kinase/diacylglycerol kinase-like"/>
    <property type="match status" value="1"/>
</dbReference>
<organism>
    <name type="scientific">Levilactobacillus brevis (strain ATCC 367 / BCRC 12310 / CIP 105137 / JCM 1170 / LMG 11437 / NCIMB 947 / NCTC 947)</name>
    <name type="common">Lactobacillus brevis</name>
    <dbReference type="NCBI Taxonomy" id="387344"/>
    <lineage>
        <taxon>Bacteria</taxon>
        <taxon>Bacillati</taxon>
        <taxon>Bacillota</taxon>
        <taxon>Bacilli</taxon>
        <taxon>Lactobacillales</taxon>
        <taxon>Lactobacillaceae</taxon>
        <taxon>Levilactobacillus</taxon>
    </lineage>
</organism>
<reference key="1">
    <citation type="journal article" date="2006" name="Proc. Natl. Acad. Sci. U.S.A.">
        <title>Comparative genomics of the lactic acid bacteria.</title>
        <authorList>
            <person name="Makarova K.S."/>
            <person name="Slesarev A."/>
            <person name="Wolf Y.I."/>
            <person name="Sorokin A."/>
            <person name="Mirkin B."/>
            <person name="Koonin E.V."/>
            <person name="Pavlov A."/>
            <person name="Pavlova N."/>
            <person name="Karamychev V."/>
            <person name="Polouchine N."/>
            <person name="Shakhova V."/>
            <person name="Grigoriev I."/>
            <person name="Lou Y."/>
            <person name="Rohksar D."/>
            <person name="Lucas S."/>
            <person name="Huang K."/>
            <person name="Goodstein D.M."/>
            <person name="Hawkins T."/>
            <person name="Plengvidhya V."/>
            <person name="Welker D."/>
            <person name="Hughes J."/>
            <person name="Goh Y."/>
            <person name="Benson A."/>
            <person name="Baldwin K."/>
            <person name="Lee J.-H."/>
            <person name="Diaz-Muniz I."/>
            <person name="Dosti B."/>
            <person name="Smeianov V."/>
            <person name="Wechter W."/>
            <person name="Barabote R."/>
            <person name="Lorca G."/>
            <person name="Altermann E."/>
            <person name="Barrangou R."/>
            <person name="Ganesan B."/>
            <person name="Xie Y."/>
            <person name="Rawsthorne H."/>
            <person name="Tamir D."/>
            <person name="Parker C."/>
            <person name="Breidt F."/>
            <person name="Broadbent J.R."/>
            <person name="Hutkins R."/>
            <person name="O'Sullivan D."/>
            <person name="Steele J."/>
            <person name="Unlu G."/>
            <person name="Saier M.H. Jr."/>
            <person name="Klaenhammer T."/>
            <person name="Richardson P."/>
            <person name="Kozyavkin S."/>
            <person name="Weimer B.C."/>
            <person name="Mills D.A."/>
        </authorList>
    </citation>
    <scope>NUCLEOTIDE SEQUENCE [LARGE SCALE GENOMIC DNA]</scope>
    <source>
        <strain>ATCC 367 / BCRC 12310 / CIP 105137 / JCM 1170 / LMG 11437 / NCIMB 947 / NCTC 947</strain>
    </source>
</reference>
<sequence length="267" mass="29407">MKVSIFSNNGLSSQKVATALQKGLTAAGVPIDSLDPDVVVTVGGDGTLLSAFHHYNDRLDKVRFVGIHTGHLGFYTDWRDYEVQELIDSLAQDNGQSVSYPLLTIQVEYADGTHPDQALALNESTIKKVSGTMVADVYIKDELFESFRGDGLCISTPTGSTAYNKSVGGAVLNPRFNAVQMAEIASINNLVFRTLGSPLIIPADEWIRIEPADPTDNVLMCDQLGIEGRPIKAIMYRIARQRIAFAEYRHTHFWQRVESSFIGRENA</sequence>
<name>NADK_LEVBA</name>
<gene>
    <name evidence="1" type="primary">nadK</name>
    <name type="ordered locus">LVIS_1472</name>
</gene>
<protein>
    <recommendedName>
        <fullName evidence="1">NAD kinase</fullName>
        <ecNumber evidence="1">2.7.1.23</ecNumber>
    </recommendedName>
    <alternativeName>
        <fullName evidence="1">ATP-dependent NAD kinase</fullName>
    </alternativeName>
</protein>
<proteinExistence type="inferred from homology"/>
<accession>Q03QF3</accession>
<keyword id="KW-0067">ATP-binding</keyword>
<keyword id="KW-0963">Cytoplasm</keyword>
<keyword id="KW-0418">Kinase</keyword>
<keyword id="KW-0520">NAD</keyword>
<keyword id="KW-0521">NADP</keyword>
<keyword id="KW-0547">Nucleotide-binding</keyword>
<keyword id="KW-1185">Reference proteome</keyword>
<keyword id="KW-0808">Transferase</keyword>
<comment type="function">
    <text evidence="1">Involved in the regulation of the intracellular balance of NAD and NADP, and is a key enzyme in the biosynthesis of NADP. Catalyzes specifically the phosphorylation on 2'-hydroxyl of the adenosine moiety of NAD to yield NADP.</text>
</comment>
<comment type="catalytic activity">
    <reaction evidence="1">
        <text>NAD(+) + ATP = ADP + NADP(+) + H(+)</text>
        <dbReference type="Rhea" id="RHEA:18629"/>
        <dbReference type="ChEBI" id="CHEBI:15378"/>
        <dbReference type="ChEBI" id="CHEBI:30616"/>
        <dbReference type="ChEBI" id="CHEBI:57540"/>
        <dbReference type="ChEBI" id="CHEBI:58349"/>
        <dbReference type="ChEBI" id="CHEBI:456216"/>
        <dbReference type="EC" id="2.7.1.23"/>
    </reaction>
</comment>
<comment type="cofactor">
    <cofactor evidence="1">
        <name>a divalent metal cation</name>
        <dbReference type="ChEBI" id="CHEBI:60240"/>
    </cofactor>
</comment>
<comment type="subcellular location">
    <subcellularLocation>
        <location evidence="1">Cytoplasm</location>
    </subcellularLocation>
</comment>
<comment type="similarity">
    <text evidence="1">Belongs to the NAD kinase family.</text>
</comment>
<feature type="chain" id="PRO_1000059869" description="NAD kinase">
    <location>
        <begin position="1"/>
        <end position="267"/>
    </location>
</feature>
<feature type="active site" description="Proton acceptor" evidence="1">
    <location>
        <position position="45"/>
    </location>
</feature>
<feature type="binding site" evidence="1">
    <location>
        <begin position="45"/>
        <end position="46"/>
    </location>
    <ligand>
        <name>NAD(+)</name>
        <dbReference type="ChEBI" id="CHEBI:57540"/>
    </ligand>
</feature>
<feature type="binding site" evidence="1">
    <location>
        <begin position="122"/>
        <end position="123"/>
    </location>
    <ligand>
        <name>NAD(+)</name>
        <dbReference type="ChEBI" id="CHEBI:57540"/>
    </ligand>
</feature>
<feature type="binding site" evidence="1">
    <location>
        <position position="148"/>
    </location>
    <ligand>
        <name>NAD(+)</name>
        <dbReference type="ChEBI" id="CHEBI:57540"/>
    </ligand>
</feature>
<feature type="binding site" evidence="1">
    <location>
        <position position="150"/>
    </location>
    <ligand>
        <name>NAD(+)</name>
        <dbReference type="ChEBI" id="CHEBI:57540"/>
    </ligand>
</feature>
<feature type="binding site" evidence="1">
    <location>
        <begin position="161"/>
        <end position="166"/>
    </location>
    <ligand>
        <name>NAD(+)</name>
        <dbReference type="ChEBI" id="CHEBI:57540"/>
    </ligand>
</feature>
<feature type="binding site" evidence="1">
    <location>
        <position position="185"/>
    </location>
    <ligand>
        <name>NAD(+)</name>
        <dbReference type="ChEBI" id="CHEBI:57540"/>
    </ligand>
</feature>
<feature type="binding site" evidence="1">
    <location>
        <position position="223"/>
    </location>
    <ligand>
        <name>NAD(+)</name>
        <dbReference type="ChEBI" id="CHEBI:57540"/>
    </ligand>
</feature>